<evidence type="ECO:0000255" key="1"/>
<evidence type="ECO:0000255" key="2">
    <source>
        <dbReference type="PROSITE-ProRule" id="PRU00555"/>
    </source>
</evidence>
<evidence type="ECO:0000269" key="3">
    <source>
    </source>
</evidence>
<evidence type="ECO:0000269" key="4">
    <source>
    </source>
</evidence>
<evidence type="ECO:0000305" key="5"/>
<evidence type="ECO:0000305" key="6">
    <source>
    </source>
</evidence>
<feature type="signal peptide" evidence="1">
    <location>
        <begin position="1"/>
        <end position="26"/>
    </location>
</feature>
<feature type="chain" id="PRO_0000024648" description="Lysophospholipase 3">
    <location>
        <begin position="27"/>
        <end position="659"/>
    </location>
</feature>
<feature type="propeptide" id="PRO_0000372444" description="Removed in mature form" evidence="1">
    <location>
        <begin position="660"/>
        <end position="686"/>
    </location>
</feature>
<feature type="domain" description="PLA2c" evidence="2">
    <location>
        <begin position="39"/>
        <end position="592"/>
    </location>
</feature>
<feature type="lipid moiety-binding region" description="GPI-anchor amidated asparagine" evidence="1">
    <location>
        <position position="659"/>
    </location>
</feature>
<feature type="glycosylation site" description="N-linked (GlcNAc...) asparagine" evidence="1">
    <location>
        <position position="56"/>
    </location>
</feature>
<feature type="glycosylation site" description="N-linked (GlcNAc...) asparagine" evidence="1">
    <location>
        <position position="82"/>
    </location>
</feature>
<feature type="glycosylation site" description="N-linked (GlcNAc...) asparagine" evidence="1">
    <location>
        <position position="129"/>
    </location>
</feature>
<feature type="glycosylation site" description="N-linked (GlcNAc...) asparagine" evidence="1">
    <location>
        <position position="166"/>
    </location>
</feature>
<feature type="glycosylation site" description="N-linked (GlcNAc...) asparagine" evidence="1">
    <location>
        <position position="221"/>
    </location>
</feature>
<feature type="glycosylation site" description="N-linked (GlcNAc...) asparagine" evidence="1">
    <location>
        <position position="283"/>
    </location>
</feature>
<feature type="glycosylation site" description="N-linked (GlcNAc...) asparagine" evidence="1">
    <location>
        <position position="313"/>
    </location>
</feature>
<feature type="glycosylation site" description="N-linked (GlcNAc...) asparagine" evidence="1">
    <location>
        <position position="351"/>
    </location>
</feature>
<feature type="glycosylation site" description="N-linked (GlcNAc...) asparagine" evidence="1">
    <location>
        <position position="495"/>
    </location>
</feature>
<feature type="glycosylation site" description="N-linked (GlcNAc...) asparagine" evidence="1">
    <location>
        <position position="519"/>
    </location>
</feature>
<feature type="glycosylation site" description="N-linked (GlcNAc...) asparagine" evidence="1">
    <location>
        <position position="547"/>
    </location>
</feature>
<feature type="glycosylation site" description="N-linked (GlcNAc...) asparagine" evidence="1">
    <location>
        <position position="571"/>
    </location>
</feature>
<feature type="glycosylation site" description="N-linked (GlcNAc...) asparagine" evidence="1">
    <location>
        <position position="588"/>
    </location>
</feature>
<feature type="glycosylation site" description="N-linked (GlcNAc...) asparagine" evidence="1">
    <location>
        <position position="614"/>
    </location>
</feature>
<dbReference type="EC" id="3.1.1.5" evidence="3"/>
<dbReference type="EMBL" id="Z74753">
    <property type="protein sequence ID" value="CAA99010.1"/>
    <property type="molecule type" value="Genomic_DNA"/>
</dbReference>
<dbReference type="EMBL" id="BK006948">
    <property type="protein sequence ID" value="DAA10772.1"/>
    <property type="molecule type" value="Genomic_DNA"/>
</dbReference>
<dbReference type="PIR" id="S66693">
    <property type="entry name" value="S66693"/>
</dbReference>
<dbReference type="RefSeq" id="NP_014632.1">
    <property type="nucleotide sequence ID" value="NM_001183265.1"/>
</dbReference>
<dbReference type="SMR" id="Q08108"/>
<dbReference type="BioGRID" id="34393">
    <property type="interactions" value="93"/>
</dbReference>
<dbReference type="DIP" id="DIP-4220N"/>
<dbReference type="FunCoup" id="Q08108">
    <property type="interactions" value="107"/>
</dbReference>
<dbReference type="IntAct" id="Q08108">
    <property type="interactions" value="1"/>
</dbReference>
<dbReference type="MINT" id="Q08108"/>
<dbReference type="STRING" id="4932.YOL011W"/>
<dbReference type="GlyCosmos" id="Q08108">
    <property type="glycosylation" value="14 sites, No reported glycans"/>
</dbReference>
<dbReference type="GlyGen" id="Q08108">
    <property type="glycosylation" value="14 sites"/>
</dbReference>
<dbReference type="PaxDb" id="4932-YOL011W"/>
<dbReference type="PeptideAtlas" id="Q08108"/>
<dbReference type="EnsemblFungi" id="YOL011W_mRNA">
    <property type="protein sequence ID" value="YOL011W"/>
    <property type="gene ID" value="YOL011W"/>
</dbReference>
<dbReference type="GeneID" id="854151"/>
<dbReference type="KEGG" id="sce:YOL011W"/>
<dbReference type="AGR" id="SGD:S000005371"/>
<dbReference type="SGD" id="S000005371">
    <property type="gene designation" value="PLB3"/>
</dbReference>
<dbReference type="VEuPathDB" id="FungiDB:YOL011W"/>
<dbReference type="eggNOG" id="KOG1325">
    <property type="taxonomic scope" value="Eukaryota"/>
</dbReference>
<dbReference type="GeneTree" id="ENSGT01030000234606"/>
<dbReference type="HOGENOM" id="CLU_014602_0_0_1"/>
<dbReference type="InParanoid" id="Q08108"/>
<dbReference type="OMA" id="GPEQYSL"/>
<dbReference type="OrthoDB" id="4084751at2759"/>
<dbReference type="BioCyc" id="MetaCyc:YOL011W-MONOMER"/>
<dbReference type="BioCyc" id="YEAST:YOL011W-MONOMER"/>
<dbReference type="Reactome" id="R-SCE-111995">
    <property type="pathway name" value="phospho-PLA2 pathway"/>
</dbReference>
<dbReference type="Reactome" id="R-SCE-1482788">
    <property type="pathway name" value="Acyl chain remodelling of PC"/>
</dbReference>
<dbReference type="Reactome" id="R-SCE-1482798">
    <property type="pathway name" value="Acyl chain remodeling of CL"/>
</dbReference>
<dbReference type="Reactome" id="R-SCE-1482801">
    <property type="pathway name" value="Acyl chain remodelling of PS"/>
</dbReference>
<dbReference type="Reactome" id="R-SCE-1482839">
    <property type="pathway name" value="Acyl chain remodelling of PE"/>
</dbReference>
<dbReference type="Reactome" id="R-SCE-1482922">
    <property type="pathway name" value="Acyl chain remodelling of PI"/>
</dbReference>
<dbReference type="Reactome" id="R-SCE-1482925">
    <property type="pathway name" value="Acyl chain remodelling of PG"/>
</dbReference>
<dbReference type="Reactome" id="R-SCE-1483115">
    <property type="pathway name" value="Hydrolysis of LPC"/>
</dbReference>
<dbReference type="Reactome" id="R-SCE-1483152">
    <property type="pathway name" value="Hydrolysis of LPE"/>
</dbReference>
<dbReference type="Reactome" id="R-SCE-1483166">
    <property type="pathway name" value="Synthesis of PA"/>
</dbReference>
<dbReference type="Reactome" id="R-SCE-2142753">
    <property type="pathway name" value="Arachidonate metabolism"/>
</dbReference>
<dbReference type="Reactome" id="R-SCE-418592">
    <property type="pathway name" value="ADP signalling through P2Y purinoceptor 1"/>
</dbReference>
<dbReference type="Reactome" id="R-SCE-432142">
    <property type="pathway name" value="Platelet sensitization by LDL"/>
</dbReference>
<dbReference type="Reactome" id="R-SCE-6811436">
    <property type="pathway name" value="COPI-independent Golgi-to-ER retrograde traffic"/>
</dbReference>
<dbReference type="BioGRID-ORCS" id="854151">
    <property type="hits" value="1 hit in 10 CRISPR screens"/>
</dbReference>
<dbReference type="PRO" id="PR:Q08108"/>
<dbReference type="Proteomes" id="UP000002311">
    <property type="component" value="Chromosome XV"/>
</dbReference>
<dbReference type="RNAct" id="Q08108">
    <property type="molecule type" value="protein"/>
</dbReference>
<dbReference type="GO" id="GO:0005829">
    <property type="term" value="C:cytosol"/>
    <property type="evidence" value="ECO:0000318"/>
    <property type="project" value="GO_Central"/>
</dbReference>
<dbReference type="GO" id="GO:0005783">
    <property type="term" value="C:endoplasmic reticulum"/>
    <property type="evidence" value="ECO:0000318"/>
    <property type="project" value="GO_Central"/>
</dbReference>
<dbReference type="GO" id="GO:0005576">
    <property type="term" value="C:extracellular region"/>
    <property type="evidence" value="ECO:0000314"/>
    <property type="project" value="SGD"/>
</dbReference>
<dbReference type="GO" id="GO:0000324">
    <property type="term" value="C:fungal-type vacuole"/>
    <property type="evidence" value="ECO:0007005"/>
    <property type="project" value="SGD"/>
</dbReference>
<dbReference type="GO" id="GO:0005886">
    <property type="term" value="C:plasma membrane"/>
    <property type="evidence" value="ECO:0000318"/>
    <property type="project" value="GO_Central"/>
</dbReference>
<dbReference type="GO" id="GO:0098552">
    <property type="term" value="C:side of membrane"/>
    <property type="evidence" value="ECO:0007669"/>
    <property type="project" value="UniProtKB-KW"/>
</dbReference>
<dbReference type="GO" id="GO:0004622">
    <property type="term" value="F:lysophospholipase activity"/>
    <property type="evidence" value="ECO:0000315"/>
    <property type="project" value="SGD"/>
</dbReference>
<dbReference type="GO" id="GO:0004623">
    <property type="term" value="F:phospholipase A2 activity"/>
    <property type="evidence" value="ECO:0000318"/>
    <property type="project" value="GO_Central"/>
</dbReference>
<dbReference type="GO" id="GO:0046475">
    <property type="term" value="P:glycerophospholipid catabolic process"/>
    <property type="evidence" value="ECO:0000318"/>
    <property type="project" value="GO_Central"/>
</dbReference>
<dbReference type="GO" id="GO:0046488">
    <property type="term" value="P:phosphatidylinositol metabolic process"/>
    <property type="evidence" value="ECO:0000314"/>
    <property type="project" value="SGD"/>
</dbReference>
<dbReference type="GO" id="GO:0006660">
    <property type="term" value="P:phosphatidylserine catabolic process"/>
    <property type="evidence" value="ECO:0000314"/>
    <property type="project" value="SGD"/>
</dbReference>
<dbReference type="CDD" id="cd07203">
    <property type="entry name" value="cPLA2_Fungal_PLB"/>
    <property type="match status" value="1"/>
</dbReference>
<dbReference type="FunFam" id="3.40.1090.10:FF:000010">
    <property type="entry name" value="Lysophospholipase"/>
    <property type="match status" value="1"/>
</dbReference>
<dbReference type="Gene3D" id="3.40.1090.10">
    <property type="entry name" value="Cytosolic phospholipase A2 catalytic domain"/>
    <property type="match status" value="1"/>
</dbReference>
<dbReference type="InterPro" id="IPR016035">
    <property type="entry name" value="Acyl_Trfase/lysoPLipase"/>
</dbReference>
<dbReference type="InterPro" id="IPR002642">
    <property type="entry name" value="LysoPLipase_cat_dom"/>
</dbReference>
<dbReference type="PANTHER" id="PTHR10728">
    <property type="entry name" value="CYTOSOLIC PHOSPHOLIPASE A2"/>
    <property type="match status" value="1"/>
</dbReference>
<dbReference type="PANTHER" id="PTHR10728:SF33">
    <property type="entry name" value="LYSOPHOSPHOLIPASE 1-RELATED"/>
    <property type="match status" value="1"/>
</dbReference>
<dbReference type="Pfam" id="PF01735">
    <property type="entry name" value="PLA2_B"/>
    <property type="match status" value="1"/>
</dbReference>
<dbReference type="SMART" id="SM00022">
    <property type="entry name" value="PLAc"/>
    <property type="match status" value="1"/>
</dbReference>
<dbReference type="SUPFAM" id="SSF52151">
    <property type="entry name" value="FabD/lysophospholipase-like"/>
    <property type="match status" value="1"/>
</dbReference>
<dbReference type="PROSITE" id="PS51210">
    <property type="entry name" value="PLA2C"/>
    <property type="match status" value="1"/>
</dbReference>
<gene>
    <name type="primary">PLB3</name>
    <name type="ordered locus">YOL011W</name>
</gene>
<sequence length="686" mass="75077">MIRPLCSKIIISYIFAISQFLLAANAWSPTDSYVPGTVSCPDDINLVREATSISQNESAWLEKRNKVTSVALKDFLTRATANFSDSSEVLSKLFNDGNSENLPKIAVAVSGGGYRSMLTGAGVLAAMDNRTEGAYEHGLGGLLQSTTYLSGASGGNWLVGTLALNNWTSVQDILNNMQNDDSIWDLSDSIVTPGGINIFKTAKRWDHISNAVESKQNADYNTSLADIWGRALAYNFFPSLNRGGIGLTWSSIRDFPVFQNAEMPFPISVADGRYPGTKVINLNATVFEFNPFEMGSWDPSLNSFANVKYLGTNVSNGVPLERGKCTAGFDNAGFIMGTSSTLFNQFLLRINSTHLPSFITRLARHFLKDLSQDFNDIAVYSPNPFKDTKFLDSDYTTSIVDSDSLFLVDGGEDDENVPVLPLIQKERDVDIIFAVDNSADMRLAWPDGSSLVHTYERQFVKQGQGMSFPYVPDTNTFVNLGLNKKPTFFGCDANNLTDLQYIPPLVVYLPNAEYSFNSNQSAFKLSYSESQRRSMIQNGFEIATRNNFTDDPEFMGCVGCAIIRRKQQALNITLPPECETCFKNYCWNGTLDTTPLPDVEKDVHHSFINVNSFNSSIGQEESLYAGSSASQSSSSSSSSSSSSEIPSATATLEKKAATNSGSHLSGISVKFSAMIMLTLLMFTGAV</sequence>
<name>PLB3_YEAST</name>
<accession>Q08108</accession>
<accession>D6W256</accession>
<organism>
    <name type="scientific">Saccharomyces cerevisiae (strain ATCC 204508 / S288c)</name>
    <name type="common">Baker's yeast</name>
    <dbReference type="NCBI Taxonomy" id="559292"/>
    <lineage>
        <taxon>Eukaryota</taxon>
        <taxon>Fungi</taxon>
        <taxon>Dikarya</taxon>
        <taxon>Ascomycota</taxon>
        <taxon>Saccharomycotina</taxon>
        <taxon>Saccharomycetes</taxon>
        <taxon>Saccharomycetales</taxon>
        <taxon>Saccharomycetaceae</taxon>
        <taxon>Saccharomyces</taxon>
    </lineage>
</organism>
<comment type="function">
    <text evidence="3 4">Sequentially removes both fatty acyl groups from diacylglycerophospholipids and therefore has both phospholipase A and lysophospholipase activities. Substrate preference is phosphatidylserine &gt; phosphatidylinositol. Does not cleave phosphatidylcholine, phosphatidylethanolamine, phosphatidic acid and phosphatidylinositol-bisphosphate (PubMed:10497163). Mainly responsible for the degradation of phosphatidylinositol in vivo (PubMed:15588231).</text>
</comment>
<comment type="catalytic activity">
    <reaction evidence="3">
        <text>a 1-acyl-sn-glycero-3-phosphocholine + H2O = sn-glycerol 3-phosphocholine + a fatty acid + H(+)</text>
        <dbReference type="Rhea" id="RHEA:15177"/>
        <dbReference type="ChEBI" id="CHEBI:15377"/>
        <dbReference type="ChEBI" id="CHEBI:15378"/>
        <dbReference type="ChEBI" id="CHEBI:16870"/>
        <dbReference type="ChEBI" id="CHEBI:28868"/>
        <dbReference type="ChEBI" id="CHEBI:58168"/>
        <dbReference type="EC" id="3.1.1.5"/>
    </reaction>
    <physiologicalReaction direction="left-to-right" evidence="6">
        <dbReference type="Rhea" id="RHEA:15178"/>
    </physiologicalReaction>
</comment>
<comment type="subcellular location">
    <subcellularLocation>
        <location evidence="3">Cell membrane</location>
        <topology evidence="5">Lipid-anchor</topology>
        <topology evidence="5">GPI-anchor</topology>
    </subcellularLocation>
</comment>
<comment type="similarity">
    <text evidence="5">Belongs to the lysophospholipase family.</text>
</comment>
<protein>
    <recommendedName>
        <fullName>Lysophospholipase 3</fullName>
        <ecNumber evidence="3">3.1.1.5</ecNumber>
    </recommendedName>
    <alternativeName>
        <fullName>Phospholipase B 3</fullName>
    </alternativeName>
</protein>
<keyword id="KW-1003">Cell membrane</keyword>
<keyword id="KW-0325">Glycoprotein</keyword>
<keyword id="KW-0336">GPI-anchor</keyword>
<keyword id="KW-0378">Hydrolase</keyword>
<keyword id="KW-0442">Lipid degradation</keyword>
<keyword id="KW-0443">Lipid metabolism</keyword>
<keyword id="KW-0449">Lipoprotein</keyword>
<keyword id="KW-0472">Membrane</keyword>
<keyword id="KW-1185">Reference proteome</keyword>
<keyword id="KW-0732">Signal</keyword>
<reference key="1">
    <citation type="journal article" date="1997" name="Nature">
        <title>The nucleotide sequence of Saccharomyces cerevisiae chromosome XV.</title>
        <authorList>
            <person name="Dujon B."/>
            <person name="Albermann K."/>
            <person name="Aldea M."/>
            <person name="Alexandraki D."/>
            <person name="Ansorge W."/>
            <person name="Arino J."/>
            <person name="Benes V."/>
            <person name="Bohn C."/>
            <person name="Bolotin-Fukuhara M."/>
            <person name="Bordonne R."/>
            <person name="Boyer J."/>
            <person name="Camasses A."/>
            <person name="Casamayor A."/>
            <person name="Casas C."/>
            <person name="Cheret G."/>
            <person name="Cziepluch C."/>
            <person name="Daignan-Fornier B."/>
            <person name="Dang V.-D."/>
            <person name="de Haan M."/>
            <person name="Delius H."/>
            <person name="Durand P."/>
            <person name="Fairhead C."/>
            <person name="Feldmann H."/>
            <person name="Gaillon L."/>
            <person name="Galisson F."/>
            <person name="Gamo F.-J."/>
            <person name="Gancedo C."/>
            <person name="Goffeau A."/>
            <person name="Goulding S.E."/>
            <person name="Grivell L.A."/>
            <person name="Habbig B."/>
            <person name="Hand N.J."/>
            <person name="Hani J."/>
            <person name="Hattenhorst U."/>
            <person name="Hebling U."/>
            <person name="Hernando Y."/>
            <person name="Herrero E."/>
            <person name="Heumann K."/>
            <person name="Hiesel R."/>
            <person name="Hilger F."/>
            <person name="Hofmann B."/>
            <person name="Hollenberg C.P."/>
            <person name="Hughes B."/>
            <person name="Jauniaux J.-C."/>
            <person name="Kalogeropoulos A."/>
            <person name="Katsoulou C."/>
            <person name="Kordes E."/>
            <person name="Lafuente M.J."/>
            <person name="Landt O."/>
            <person name="Louis E.J."/>
            <person name="Maarse A.C."/>
            <person name="Madania A."/>
            <person name="Mannhaupt G."/>
            <person name="Marck C."/>
            <person name="Martin R.P."/>
            <person name="Mewes H.-W."/>
            <person name="Michaux G."/>
            <person name="Paces V."/>
            <person name="Parle-McDermott A.G."/>
            <person name="Pearson B.M."/>
            <person name="Perrin A."/>
            <person name="Pettersson B."/>
            <person name="Poch O."/>
            <person name="Pohl T.M."/>
            <person name="Poirey R."/>
            <person name="Portetelle D."/>
            <person name="Pujol A."/>
            <person name="Purnelle B."/>
            <person name="Ramezani Rad M."/>
            <person name="Rechmann S."/>
            <person name="Schwager C."/>
            <person name="Schweizer M."/>
            <person name="Sor F."/>
            <person name="Sterky F."/>
            <person name="Tarassov I.A."/>
            <person name="Teodoru C."/>
            <person name="Tettelin H."/>
            <person name="Thierry A."/>
            <person name="Tobiasch E."/>
            <person name="Tzermia M."/>
            <person name="Uhlen M."/>
            <person name="Unseld M."/>
            <person name="Valens M."/>
            <person name="Vandenbol M."/>
            <person name="Vetter I."/>
            <person name="Vlcek C."/>
            <person name="Voet M."/>
            <person name="Volckaert G."/>
            <person name="Voss H."/>
            <person name="Wambutt R."/>
            <person name="Wedler H."/>
            <person name="Wiemann S."/>
            <person name="Winsor B."/>
            <person name="Wolfe K.H."/>
            <person name="Zollner A."/>
            <person name="Zumstein E."/>
            <person name="Kleine K."/>
        </authorList>
    </citation>
    <scope>NUCLEOTIDE SEQUENCE [LARGE SCALE GENOMIC DNA]</scope>
    <source>
        <strain>ATCC 204508 / S288c</strain>
    </source>
</reference>
<reference key="2">
    <citation type="journal article" date="2014" name="G3 (Bethesda)">
        <title>The reference genome sequence of Saccharomyces cerevisiae: Then and now.</title>
        <authorList>
            <person name="Engel S.R."/>
            <person name="Dietrich F.S."/>
            <person name="Fisk D.G."/>
            <person name="Binkley G."/>
            <person name="Balakrishnan R."/>
            <person name="Costanzo M.C."/>
            <person name="Dwight S.S."/>
            <person name="Hitz B.C."/>
            <person name="Karra K."/>
            <person name="Nash R.S."/>
            <person name="Weng S."/>
            <person name="Wong E.D."/>
            <person name="Lloyd P."/>
            <person name="Skrzypek M.S."/>
            <person name="Miyasato S.R."/>
            <person name="Simison M."/>
            <person name="Cherry J.M."/>
        </authorList>
    </citation>
    <scope>GENOME REANNOTATION</scope>
    <source>
        <strain>ATCC 204508 / S288c</strain>
    </source>
</reference>
<reference key="3">
    <citation type="journal article" date="1999" name="J. Biol. Chem.">
        <title>Characterization and function in vivo of two novel phospholipases B/lysophospholipases from Saccharomyces cerevisiae.</title>
        <authorList>
            <person name="Merkel O."/>
            <person name="Fido M."/>
            <person name="Mayr J.A."/>
            <person name="Prueger H."/>
            <person name="Raab F."/>
            <person name="Zandonella G."/>
            <person name="Kohlwein S.D."/>
            <person name="Paltauf F."/>
        </authorList>
    </citation>
    <scope>FUNCTION</scope>
    <scope>SUBCELLULAR LOCATION</scope>
    <scope>CATALYTIC ACTIVITY</scope>
</reference>
<reference key="4">
    <citation type="journal article" date="2005" name="Biochem. J.">
        <title>Regulation of activity in vitro and in vivo of three phospholipases B from Saccharomyces cerevisiae.</title>
        <authorList>
            <person name="Merkel O."/>
            <person name="Oskolkova O.V."/>
            <person name="Raab F."/>
            <person name="El-Toukhy R."/>
            <person name="Paltauf F."/>
        </authorList>
    </citation>
    <scope>FUNCTION</scope>
    <scope>SUBSTRATE SPECIFICITY</scope>
</reference>
<proteinExistence type="evidence at protein level"/>